<protein>
    <recommendedName>
        <fullName evidence="1">Ferrochelatase</fullName>
        <ecNumber evidence="1">4.98.1.1</ecNumber>
    </recommendedName>
    <alternativeName>
        <fullName evidence="1">Heme synthase</fullName>
    </alternativeName>
    <alternativeName>
        <fullName evidence="1">Protoheme ferro-lyase</fullName>
    </alternativeName>
</protein>
<evidence type="ECO:0000255" key="1">
    <source>
        <dbReference type="HAMAP-Rule" id="MF_00323"/>
    </source>
</evidence>
<sequence>MSFDSVPRHALSMRFDLEPPSHASAAHRVAVLLVNLGTPDAPTPRAVRRYLAQFLSDPRVVEIPQLVWQVILCTLILPLRGRASAKKYAAVWLPEGSPLRVYTERQVESVKPLFAANGYRVIVDYAMRYGTPSIADVLAQLKRAGAERVLLLPMYPQYSSSTTATAFDAAFAALGRMRNQPEVRTVRHYADHPAYIHALAEQVRQYWAAHGRPAFDAGDKLVLSFHGVPKRTLDLGDPYHDQCQQTAALLMSALGLTTFECRVTFQSRFGKAEWLQPYTAPTLKELGAAGVRRADVFCPGFTADCLETIEEIGIEVRDEFVHGGGKEFHRIPCLNASPAWIAALGEIAAENLQGWPVRVAMAPEAVS</sequence>
<keyword id="KW-0963">Cytoplasm</keyword>
<keyword id="KW-0350">Heme biosynthesis</keyword>
<keyword id="KW-0408">Iron</keyword>
<keyword id="KW-0456">Lyase</keyword>
<keyword id="KW-0479">Metal-binding</keyword>
<keyword id="KW-0627">Porphyrin biosynthesis</keyword>
<accession>A1V0U1</accession>
<feature type="chain" id="PRO_1000019281" description="Ferrochelatase">
    <location>
        <begin position="1"/>
        <end position="367"/>
    </location>
</feature>
<feature type="binding site" evidence="1">
    <location>
        <position position="226"/>
    </location>
    <ligand>
        <name>Fe cation</name>
        <dbReference type="ChEBI" id="CHEBI:24875"/>
    </ligand>
</feature>
<feature type="binding site" evidence="1">
    <location>
        <position position="307"/>
    </location>
    <ligand>
        <name>Fe cation</name>
        <dbReference type="ChEBI" id="CHEBI:24875"/>
    </ligand>
</feature>
<comment type="function">
    <text evidence="1">Catalyzes the ferrous insertion into protoporphyrin IX.</text>
</comment>
<comment type="catalytic activity">
    <reaction evidence="1">
        <text>heme b + 2 H(+) = protoporphyrin IX + Fe(2+)</text>
        <dbReference type="Rhea" id="RHEA:22584"/>
        <dbReference type="ChEBI" id="CHEBI:15378"/>
        <dbReference type="ChEBI" id="CHEBI:29033"/>
        <dbReference type="ChEBI" id="CHEBI:57306"/>
        <dbReference type="ChEBI" id="CHEBI:60344"/>
        <dbReference type="EC" id="4.98.1.1"/>
    </reaction>
</comment>
<comment type="pathway">
    <text evidence="1">Porphyrin-containing compound metabolism; protoheme biosynthesis; protoheme from protoporphyrin-IX: step 1/1.</text>
</comment>
<comment type="subcellular location">
    <subcellularLocation>
        <location evidence="1">Cytoplasm</location>
    </subcellularLocation>
</comment>
<comment type="similarity">
    <text evidence="1">Belongs to the ferrochelatase family.</text>
</comment>
<dbReference type="EC" id="4.98.1.1" evidence="1"/>
<dbReference type="EMBL" id="CP000526">
    <property type="protein sequence ID" value="ABM50561.1"/>
    <property type="molecule type" value="Genomic_DNA"/>
</dbReference>
<dbReference type="SMR" id="A1V0U1"/>
<dbReference type="KEGG" id="bmv:BMASAVP1_A0495"/>
<dbReference type="HOGENOM" id="CLU_018884_0_0_4"/>
<dbReference type="UniPathway" id="UPA00252">
    <property type="reaction ID" value="UER00325"/>
</dbReference>
<dbReference type="GO" id="GO:0005737">
    <property type="term" value="C:cytoplasm"/>
    <property type="evidence" value="ECO:0007669"/>
    <property type="project" value="UniProtKB-SubCell"/>
</dbReference>
<dbReference type="GO" id="GO:0004325">
    <property type="term" value="F:ferrochelatase activity"/>
    <property type="evidence" value="ECO:0007669"/>
    <property type="project" value="UniProtKB-UniRule"/>
</dbReference>
<dbReference type="GO" id="GO:0046872">
    <property type="term" value="F:metal ion binding"/>
    <property type="evidence" value="ECO:0007669"/>
    <property type="project" value="UniProtKB-KW"/>
</dbReference>
<dbReference type="GO" id="GO:0006783">
    <property type="term" value="P:heme biosynthetic process"/>
    <property type="evidence" value="ECO:0007669"/>
    <property type="project" value="UniProtKB-UniRule"/>
</dbReference>
<dbReference type="CDD" id="cd00419">
    <property type="entry name" value="Ferrochelatase_C"/>
    <property type="match status" value="1"/>
</dbReference>
<dbReference type="CDD" id="cd03411">
    <property type="entry name" value="Ferrochelatase_N"/>
    <property type="match status" value="1"/>
</dbReference>
<dbReference type="FunFam" id="3.40.50.1400:FF:000002">
    <property type="entry name" value="Ferrochelatase"/>
    <property type="match status" value="1"/>
</dbReference>
<dbReference type="Gene3D" id="3.40.50.1400">
    <property type="match status" value="2"/>
</dbReference>
<dbReference type="HAMAP" id="MF_00323">
    <property type="entry name" value="Ferrochelatase"/>
    <property type="match status" value="1"/>
</dbReference>
<dbReference type="InterPro" id="IPR001015">
    <property type="entry name" value="Ferrochelatase"/>
</dbReference>
<dbReference type="InterPro" id="IPR019772">
    <property type="entry name" value="Ferrochelatase_AS"/>
</dbReference>
<dbReference type="InterPro" id="IPR033644">
    <property type="entry name" value="Ferrochelatase_C"/>
</dbReference>
<dbReference type="InterPro" id="IPR033659">
    <property type="entry name" value="Ferrochelatase_N"/>
</dbReference>
<dbReference type="NCBIfam" id="TIGR00109">
    <property type="entry name" value="hemH"/>
    <property type="match status" value="1"/>
</dbReference>
<dbReference type="PANTHER" id="PTHR11108">
    <property type="entry name" value="FERROCHELATASE"/>
    <property type="match status" value="1"/>
</dbReference>
<dbReference type="PANTHER" id="PTHR11108:SF1">
    <property type="entry name" value="FERROCHELATASE, MITOCHONDRIAL"/>
    <property type="match status" value="1"/>
</dbReference>
<dbReference type="Pfam" id="PF00762">
    <property type="entry name" value="Ferrochelatase"/>
    <property type="match status" value="1"/>
</dbReference>
<dbReference type="SUPFAM" id="SSF53800">
    <property type="entry name" value="Chelatase"/>
    <property type="match status" value="1"/>
</dbReference>
<dbReference type="PROSITE" id="PS00534">
    <property type="entry name" value="FERROCHELATASE"/>
    <property type="match status" value="1"/>
</dbReference>
<gene>
    <name evidence="1" type="primary">hemH</name>
    <name type="ordered locus">BMASAVP1_A0495</name>
</gene>
<organism>
    <name type="scientific">Burkholderia mallei (strain SAVP1)</name>
    <dbReference type="NCBI Taxonomy" id="320388"/>
    <lineage>
        <taxon>Bacteria</taxon>
        <taxon>Pseudomonadati</taxon>
        <taxon>Pseudomonadota</taxon>
        <taxon>Betaproteobacteria</taxon>
        <taxon>Burkholderiales</taxon>
        <taxon>Burkholderiaceae</taxon>
        <taxon>Burkholderia</taxon>
        <taxon>pseudomallei group</taxon>
    </lineage>
</organism>
<proteinExistence type="inferred from homology"/>
<name>HEMH_BURMS</name>
<reference key="1">
    <citation type="journal article" date="2010" name="Genome Biol. Evol.">
        <title>Continuing evolution of Burkholderia mallei through genome reduction and large-scale rearrangements.</title>
        <authorList>
            <person name="Losada L."/>
            <person name="Ronning C.M."/>
            <person name="DeShazer D."/>
            <person name="Woods D."/>
            <person name="Fedorova N."/>
            <person name="Kim H.S."/>
            <person name="Shabalina S.A."/>
            <person name="Pearson T.R."/>
            <person name="Brinkac L."/>
            <person name="Tan P."/>
            <person name="Nandi T."/>
            <person name="Crabtree J."/>
            <person name="Badger J."/>
            <person name="Beckstrom-Sternberg S."/>
            <person name="Saqib M."/>
            <person name="Schutzer S.E."/>
            <person name="Keim P."/>
            <person name="Nierman W.C."/>
        </authorList>
    </citation>
    <scope>NUCLEOTIDE SEQUENCE [LARGE SCALE GENOMIC DNA]</scope>
    <source>
        <strain>SAVP1</strain>
    </source>
</reference>